<dbReference type="EMBL" id="AE017194">
    <property type="protein sequence ID" value="AAS39056.1"/>
    <property type="molecule type" value="Genomic_DNA"/>
</dbReference>
<dbReference type="SMR" id="Q73F86"/>
<dbReference type="KEGG" id="bca:BCE_0120"/>
<dbReference type="HOGENOM" id="CLU_095071_2_1_9"/>
<dbReference type="Proteomes" id="UP000002527">
    <property type="component" value="Chromosome"/>
</dbReference>
<dbReference type="GO" id="GO:0022625">
    <property type="term" value="C:cytosolic large ribosomal subunit"/>
    <property type="evidence" value="ECO:0007669"/>
    <property type="project" value="TreeGrafter"/>
</dbReference>
<dbReference type="GO" id="GO:0070180">
    <property type="term" value="F:large ribosomal subunit rRNA binding"/>
    <property type="evidence" value="ECO:0007669"/>
    <property type="project" value="TreeGrafter"/>
</dbReference>
<dbReference type="GO" id="GO:0003735">
    <property type="term" value="F:structural constituent of ribosome"/>
    <property type="evidence" value="ECO:0007669"/>
    <property type="project" value="InterPro"/>
</dbReference>
<dbReference type="GO" id="GO:0006412">
    <property type="term" value="P:translation"/>
    <property type="evidence" value="ECO:0007669"/>
    <property type="project" value="UniProtKB-UniRule"/>
</dbReference>
<dbReference type="CDD" id="cd00337">
    <property type="entry name" value="Ribosomal_uL14"/>
    <property type="match status" value="1"/>
</dbReference>
<dbReference type="FunFam" id="2.40.150.20:FF:000001">
    <property type="entry name" value="50S ribosomal protein L14"/>
    <property type="match status" value="1"/>
</dbReference>
<dbReference type="Gene3D" id="2.40.150.20">
    <property type="entry name" value="Ribosomal protein L14"/>
    <property type="match status" value="1"/>
</dbReference>
<dbReference type="HAMAP" id="MF_01367">
    <property type="entry name" value="Ribosomal_uL14"/>
    <property type="match status" value="1"/>
</dbReference>
<dbReference type="InterPro" id="IPR000218">
    <property type="entry name" value="Ribosomal_uL14"/>
</dbReference>
<dbReference type="InterPro" id="IPR005745">
    <property type="entry name" value="Ribosomal_uL14_bac-type"/>
</dbReference>
<dbReference type="InterPro" id="IPR019972">
    <property type="entry name" value="Ribosomal_uL14_CS"/>
</dbReference>
<dbReference type="InterPro" id="IPR036853">
    <property type="entry name" value="Ribosomal_uL14_sf"/>
</dbReference>
<dbReference type="NCBIfam" id="TIGR01067">
    <property type="entry name" value="rplN_bact"/>
    <property type="match status" value="1"/>
</dbReference>
<dbReference type="PANTHER" id="PTHR11761">
    <property type="entry name" value="50S/60S RIBOSOMAL PROTEIN L14/L23"/>
    <property type="match status" value="1"/>
</dbReference>
<dbReference type="PANTHER" id="PTHR11761:SF3">
    <property type="entry name" value="LARGE RIBOSOMAL SUBUNIT PROTEIN UL14M"/>
    <property type="match status" value="1"/>
</dbReference>
<dbReference type="Pfam" id="PF00238">
    <property type="entry name" value="Ribosomal_L14"/>
    <property type="match status" value="1"/>
</dbReference>
<dbReference type="SMART" id="SM01374">
    <property type="entry name" value="Ribosomal_L14"/>
    <property type="match status" value="1"/>
</dbReference>
<dbReference type="SUPFAM" id="SSF50193">
    <property type="entry name" value="Ribosomal protein L14"/>
    <property type="match status" value="1"/>
</dbReference>
<dbReference type="PROSITE" id="PS00049">
    <property type="entry name" value="RIBOSOMAL_L14"/>
    <property type="match status" value="1"/>
</dbReference>
<proteinExistence type="inferred from homology"/>
<sequence length="122" mass="13120">MIQQESRLKVADNSGARELLTIKVLGGSGRKYANIGDIIVATVKQATPGGVVKKGDVVKAVVVRTKSGARRPDGSYIKFDENAAVIIKDDKSPRGTRIFGPVARELRDSNFMKIVSLAPEVL</sequence>
<evidence type="ECO:0000255" key="1">
    <source>
        <dbReference type="HAMAP-Rule" id="MF_01367"/>
    </source>
</evidence>
<evidence type="ECO:0000305" key="2"/>
<comment type="function">
    <text evidence="1">Binds to 23S rRNA. Forms part of two intersubunit bridges in the 70S ribosome.</text>
</comment>
<comment type="subunit">
    <text evidence="1">Part of the 50S ribosomal subunit. Forms a cluster with proteins L3 and L19. In the 70S ribosome, L14 and L19 interact and together make contacts with the 16S rRNA in bridges B5 and B8.</text>
</comment>
<comment type="similarity">
    <text evidence="1">Belongs to the universal ribosomal protein uL14 family.</text>
</comment>
<organism>
    <name type="scientific">Bacillus cereus (strain ATCC 10987 / NRS 248)</name>
    <dbReference type="NCBI Taxonomy" id="222523"/>
    <lineage>
        <taxon>Bacteria</taxon>
        <taxon>Bacillati</taxon>
        <taxon>Bacillota</taxon>
        <taxon>Bacilli</taxon>
        <taxon>Bacillales</taxon>
        <taxon>Bacillaceae</taxon>
        <taxon>Bacillus</taxon>
        <taxon>Bacillus cereus group</taxon>
    </lineage>
</organism>
<reference key="1">
    <citation type="journal article" date="2004" name="Nucleic Acids Res.">
        <title>The genome sequence of Bacillus cereus ATCC 10987 reveals metabolic adaptations and a large plasmid related to Bacillus anthracis pXO1.</title>
        <authorList>
            <person name="Rasko D.A."/>
            <person name="Ravel J."/>
            <person name="Oekstad O.A."/>
            <person name="Helgason E."/>
            <person name="Cer R.Z."/>
            <person name="Jiang L."/>
            <person name="Shores K.A."/>
            <person name="Fouts D.E."/>
            <person name="Tourasse N.J."/>
            <person name="Angiuoli S.V."/>
            <person name="Kolonay J.F."/>
            <person name="Nelson W.C."/>
            <person name="Kolstoe A.-B."/>
            <person name="Fraser C.M."/>
            <person name="Read T.D."/>
        </authorList>
    </citation>
    <scope>NUCLEOTIDE SEQUENCE [LARGE SCALE GENOMIC DNA]</scope>
    <source>
        <strain>ATCC 10987 / NRS 248</strain>
    </source>
</reference>
<gene>
    <name evidence="1" type="primary">rplN</name>
    <name type="ordered locus">BCE_0120</name>
</gene>
<feature type="chain" id="PRO_1000055511" description="Large ribosomal subunit protein uL14">
    <location>
        <begin position="1"/>
        <end position="122"/>
    </location>
</feature>
<name>RL14_BACC1</name>
<keyword id="KW-0687">Ribonucleoprotein</keyword>
<keyword id="KW-0689">Ribosomal protein</keyword>
<keyword id="KW-0694">RNA-binding</keyword>
<keyword id="KW-0699">rRNA-binding</keyword>
<accession>Q73F86</accession>
<protein>
    <recommendedName>
        <fullName evidence="1">Large ribosomal subunit protein uL14</fullName>
    </recommendedName>
    <alternativeName>
        <fullName evidence="2">50S ribosomal protein L14</fullName>
    </alternativeName>
</protein>